<evidence type="ECO:0000250" key="1"/>
<evidence type="ECO:0000255" key="2"/>
<evidence type="ECO:0000305" key="3"/>
<keyword id="KW-1015">Disulfide bond</keyword>
<keyword id="KW-0964">Secreted</keyword>
<keyword id="KW-0732">Signal</keyword>
<keyword id="KW-0800">Toxin</keyword>
<organism>
    <name type="scientific">Lycosa singoriensis</name>
    <name type="common">Wolf spider</name>
    <name type="synonym">Aranea singoriensis</name>
    <dbReference type="NCBI Taxonomy" id="434756"/>
    <lineage>
        <taxon>Eukaryota</taxon>
        <taxon>Metazoa</taxon>
        <taxon>Ecdysozoa</taxon>
        <taxon>Arthropoda</taxon>
        <taxon>Chelicerata</taxon>
        <taxon>Arachnida</taxon>
        <taxon>Araneae</taxon>
        <taxon>Araneomorphae</taxon>
        <taxon>Entelegynae</taxon>
        <taxon>Lycosoidea</taxon>
        <taxon>Lycosidae</taxon>
        <taxon>Lycosa</taxon>
    </lineage>
</organism>
<comment type="subcellular location">
    <subcellularLocation>
        <location evidence="1">Secreted</location>
    </subcellularLocation>
</comment>
<comment type="tissue specificity">
    <text>Expressed by the venom gland.</text>
</comment>
<comment type="PTM">
    <text evidence="1">Contains 4 disulfide bonds.</text>
</comment>
<comment type="similarity">
    <text evidence="3">Belongs to the neurotoxin 19 (CSTX) family. 08 (U8-Lctx) subfamily.</text>
</comment>
<feature type="signal peptide" evidence="2">
    <location>
        <begin position="1"/>
        <end position="20"/>
    </location>
</feature>
<feature type="propeptide" id="PRO_0000401771" evidence="1">
    <location>
        <begin position="21"/>
        <end position="26"/>
    </location>
</feature>
<feature type="chain" id="PRO_0000401772" description="U8-lycotoxin-Ls1u">
    <location>
        <begin position="27"/>
        <end position="77"/>
    </location>
</feature>
<sequence length="77" mass="8559">MKLIIFTGLVLFAIVSLIEAQAENEKACLPQYQVCTDAPGNCCSDLVCDCYGRYKSGARIGRNCFCLQKGVIYKRED</sequence>
<proteinExistence type="evidence at transcript level"/>
<protein>
    <recommendedName>
        <fullName>U8-lycotoxin-Ls1u</fullName>
    </recommendedName>
    <alternativeName>
        <fullName>Toxin-like structure LSTX-H4</fullName>
    </alternativeName>
</protein>
<reference key="1">
    <citation type="journal article" date="2010" name="Zoology">
        <title>Transcriptome analysis of the venom glands of the Chinese wolf spider Lycosa singoriensis.</title>
        <authorList>
            <person name="Zhang Y."/>
            <person name="Chen J."/>
            <person name="Tang X."/>
            <person name="Wang F."/>
            <person name="Jiang L."/>
            <person name="Xiong X."/>
            <person name="Wang M."/>
            <person name="Rong M."/>
            <person name="Liu Z."/>
            <person name="Liang S."/>
        </authorList>
    </citation>
    <scope>NUCLEOTIDE SEQUENCE [LARGE SCALE MRNA]</scope>
    <source>
        <tissue>Venom gland</tissue>
    </source>
</reference>
<accession>B6DCX5</accession>
<name>TX804_LYCSI</name>
<dbReference type="EMBL" id="EU926059">
    <property type="protein sequence ID" value="ACI41391.1"/>
    <property type="molecule type" value="mRNA"/>
</dbReference>
<dbReference type="EMBL" id="FM864063">
    <property type="protein sequence ID" value="CAS03660.1"/>
    <property type="molecule type" value="mRNA"/>
</dbReference>
<dbReference type="SMR" id="B6DCX5"/>
<dbReference type="ArachnoServer" id="AS000998">
    <property type="toxin name" value="U8-lycotoxin-Ls1u"/>
</dbReference>
<dbReference type="GO" id="GO:0005576">
    <property type="term" value="C:extracellular region"/>
    <property type="evidence" value="ECO:0007669"/>
    <property type="project" value="UniProtKB-SubCell"/>
</dbReference>
<dbReference type="GO" id="GO:0090729">
    <property type="term" value="F:toxin activity"/>
    <property type="evidence" value="ECO:0007669"/>
    <property type="project" value="UniProtKB-KW"/>
</dbReference>
<dbReference type="InterPro" id="IPR019553">
    <property type="entry name" value="Spider_toxin_CSTX_knottin"/>
</dbReference>
<dbReference type="Pfam" id="PF10530">
    <property type="entry name" value="Toxin_35"/>
    <property type="match status" value="1"/>
</dbReference>